<protein>
    <recommendedName>
        <fullName>Dolichyl-diphosphooligosaccharide--protein glycosyltransferase subunit 4</fullName>
    </recommendedName>
</protein>
<comment type="function">
    <text evidence="2">Subunit of the oligosaccharyl transferase (OST) complex that catalyzes the initial transfer of a defined glycan (Glc(3)Man(9)GlcNAc(2) in eukaryotes) from the lipid carrier dolichol-pyrophosphate to an asparagine residue within an Asn-X-Ser/Thr consensus motif in nascent polypeptide chains, the first step in protein N-glycosylation. N-glycosylation occurs cotranslationally and the complex associates with the Sec61 complex at the channel-forming translocon complex that mediates protein translocation across the endoplasmic reticulum (ER). All subunits are required for a maximal enzyme activity.</text>
</comment>
<comment type="pathway">
    <text>Protein modification; protein glycosylation.</text>
</comment>
<comment type="subunit">
    <text evidence="2">Component of the oligosaccharyltransferase (OST) complex.</text>
</comment>
<comment type="subcellular location">
    <subcellularLocation>
        <location evidence="1">Endoplasmic reticulum membrane</location>
        <topology evidence="1">Single-pass type III membrane protein</topology>
    </subcellularLocation>
</comment>
<comment type="similarity">
    <text evidence="4">Belongs to the OST4 family.</text>
</comment>
<evidence type="ECO:0000250" key="1"/>
<evidence type="ECO:0000250" key="2">
    <source>
        <dbReference type="UniProtKB" id="Q99380"/>
    </source>
</evidence>
<evidence type="ECO:0000255" key="3"/>
<evidence type="ECO:0000305" key="4"/>
<accession>Q54V54</accession>
<sequence length="40" mass="4447">MITDTQLTLLSNTLGATIFLLIVYYHYVATKTVTAAKKDN</sequence>
<name>OST4_DICDI</name>
<feature type="chain" id="PRO_0000328641" description="Dolichyl-diphosphooligosaccharide--protein glycosyltransferase subunit 4">
    <location>
        <begin position="1"/>
        <end position="40"/>
    </location>
</feature>
<feature type="topological domain" description="Lumenal" evidence="3">
    <location>
        <begin position="1"/>
        <end position="6"/>
    </location>
</feature>
<feature type="transmembrane region" description="Helical" evidence="3">
    <location>
        <begin position="7"/>
        <end position="29"/>
    </location>
</feature>
<feature type="topological domain" description="Cytoplasmic" evidence="3">
    <location>
        <begin position="30"/>
        <end position="40"/>
    </location>
</feature>
<organism>
    <name type="scientific">Dictyostelium discoideum</name>
    <name type="common">Social amoeba</name>
    <dbReference type="NCBI Taxonomy" id="44689"/>
    <lineage>
        <taxon>Eukaryota</taxon>
        <taxon>Amoebozoa</taxon>
        <taxon>Evosea</taxon>
        <taxon>Eumycetozoa</taxon>
        <taxon>Dictyostelia</taxon>
        <taxon>Dictyosteliales</taxon>
        <taxon>Dictyosteliaceae</taxon>
        <taxon>Dictyostelium</taxon>
    </lineage>
</organism>
<dbReference type="EMBL" id="AAFI02000037">
    <property type="protein sequence ID" value="EAL67106.1"/>
    <property type="molecule type" value="Genomic_DNA"/>
</dbReference>
<dbReference type="RefSeq" id="XP_641077.1">
    <property type="nucleotide sequence ID" value="XM_635985.1"/>
</dbReference>
<dbReference type="SMR" id="Q54V54"/>
<dbReference type="FunCoup" id="Q54V54">
    <property type="interactions" value="10"/>
</dbReference>
<dbReference type="STRING" id="44689.Q54V54"/>
<dbReference type="PaxDb" id="44689-DDB0233179"/>
<dbReference type="EnsemblProtists" id="EAL67106">
    <property type="protein sequence ID" value="EAL67106"/>
    <property type="gene ID" value="DDB_G0280609"/>
</dbReference>
<dbReference type="GeneID" id="8622636"/>
<dbReference type="KEGG" id="ddi:DDB_G0280609"/>
<dbReference type="dictyBase" id="DDB_G0280609">
    <property type="gene designation" value="ost4"/>
</dbReference>
<dbReference type="HOGENOM" id="CLU_186352_2_0_1"/>
<dbReference type="InParanoid" id="Q54V54"/>
<dbReference type="PhylomeDB" id="Q54V54"/>
<dbReference type="UniPathway" id="UPA00378"/>
<dbReference type="PRO" id="PR:Q54V54"/>
<dbReference type="Proteomes" id="UP000002195">
    <property type="component" value="Chromosome 3"/>
</dbReference>
<dbReference type="GO" id="GO:0008250">
    <property type="term" value="C:oligosaccharyltransferase complex"/>
    <property type="evidence" value="ECO:0000250"/>
    <property type="project" value="dictyBase"/>
</dbReference>
<dbReference type="GO" id="GO:0006487">
    <property type="term" value="P:protein N-linked glycosylation"/>
    <property type="evidence" value="ECO:0000250"/>
    <property type="project" value="dictyBase"/>
</dbReference>
<dbReference type="InterPro" id="IPR018943">
    <property type="entry name" value="Oligosaccaryltransferase"/>
</dbReference>
<dbReference type="InterPro" id="IPR036330">
    <property type="entry name" value="Ost4p_sf"/>
</dbReference>
<dbReference type="Pfam" id="PF10215">
    <property type="entry name" value="Ost4"/>
    <property type="match status" value="1"/>
</dbReference>
<dbReference type="SUPFAM" id="SSF103464">
    <property type="entry name" value="Oligosaccharyltransferase subunit ost4p"/>
    <property type="match status" value="1"/>
</dbReference>
<gene>
    <name type="primary">ost4</name>
    <name type="ORF">DDB_G0280609</name>
</gene>
<reference key="1">
    <citation type="journal article" date="2005" name="Nature">
        <title>The genome of the social amoeba Dictyostelium discoideum.</title>
        <authorList>
            <person name="Eichinger L."/>
            <person name="Pachebat J.A."/>
            <person name="Gloeckner G."/>
            <person name="Rajandream M.A."/>
            <person name="Sucgang R."/>
            <person name="Berriman M."/>
            <person name="Song J."/>
            <person name="Olsen R."/>
            <person name="Szafranski K."/>
            <person name="Xu Q."/>
            <person name="Tunggal B."/>
            <person name="Kummerfeld S."/>
            <person name="Madera M."/>
            <person name="Konfortov B.A."/>
            <person name="Rivero F."/>
            <person name="Bankier A.T."/>
            <person name="Lehmann R."/>
            <person name="Hamlin N."/>
            <person name="Davies R."/>
            <person name="Gaudet P."/>
            <person name="Fey P."/>
            <person name="Pilcher K."/>
            <person name="Chen G."/>
            <person name="Saunders D."/>
            <person name="Sodergren E.J."/>
            <person name="Davis P."/>
            <person name="Kerhornou A."/>
            <person name="Nie X."/>
            <person name="Hall N."/>
            <person name="Anjard C."/>
            <person name="Hemphill L."/>
            <person name="Bason N."/>
            <person name="Farbrother P."/>
            <person name="Desany B."/>
            <person name="Just E."/>
            <person name="Morio T."/>
            <person name="Rost R."/>
            <person name="Churcher C.M."/>
            <person name="Cooper J."/>
            <person name="Haydock S."/>
            <person name="van Driessche N."/>
            <person name="Cronin A."/>
            <person name="Goodhead I."/>
            <person name="Muzny D.M."/>
            <person name="Mourier T."/>
            <person name="Pain A."/>
            <person name="Lu M."/>
            <person name="Harper D."/>
            <person name="Lindsay R."/>
            <person name="Hauser H."/>
            <person name="James K.D."/>
            <person name="Quiles M."/>
            <person name="Madan Babu M."/>
            <person name="Saito T."/>
            <person name="Buchrieser C."/>
            <person name="Wardroper A."/>
            <person name="Felder M."/>
            <person name="Thangavelu M."/>
            <person name="Johnson D."/>
            <person name="Knights A."/>
            <person name="Loulseged H."/>
            <person name="Mungall K.L."/>
            <person name="Oliver K."/>
            <person name="Price C."/>
            <person name="Quail M.A."/>
            <person name="Urushihara H."/>
            <person name="Hernandez J."/>
            <person name="Rabbinowitsch E."/>
            <person name="Steffen D."/>
            <person name="Sanders M."/>
            <person name="Ma J."/>
            <person name="Kohara Y."/>
            <person name="Sharp S."/>
            <person name="Simmonds M.N."/>
            <person name="Spiegler S."/>
            <person name="Tivey A."/>
            <person name="Sugano S."/>
            <person name="White B."/>
            <person name="Walker D."/>
            <person name="Woodward J.R."/>
            <person name="Winckler T."/>
            <person name="Tanaka Y."/>
            <person name="Shaulsky G."/>
            <person name="Schleicher M."/>
            <person name="Weinstock G.M."/>
            <person name="Rosenthal A."/>
            <person name="Cox E.C."/>
            <person name="Chisholm R.L."/>
            <person name="Gibbs R.A."/>
            <person name="Loomis W.F."/>
            <person name="Platzer M."/>
            <person name="Kay R.R."/>
            <person name="Williams J.G."/>
            <person name="Dear P.H."/>
            <person name="Noegel A.A."/>
            <person name="Barrell B.G."/>
            <person name="Kuspa A."/>
        </authorList>
    </citation>
    <scope>NUCLEOTIDE SEQUENCE [LARGE SCALE GENOMIC DNA]</scope>
    <source>
        <strain>AX4</strain>
    </source>
</reference>
<proteinExistence type="inferred from homology"/>
<keyword id="KW-0256">Endoplasmic reticulum</keyword>
<keyword id="KW-0472">Membrane</keyword>
<keyword id="KW-1185">Reference proteome</keyword>
<keyword id="KW-0735">Signal-anchor</keyword>
<keyword id="KW-0812">Transmembrane</keyword>
<keyword id="KW-1133">Transmembrane helix</keyword>